<proteinExistence type="inferred from homology"/>
<accession>P59386</accession>
<sequence length="259" mass="28974">MDLLSRARKINAMLQTATGKSVNFNEMSASLRDVIRGNVYIVSRRGKLLGFAVNQEIENERMKSMLEERQFPEEYTRGLHDIRETTPNLDIESTHTVFPVENKELFKDGLTTIVPIIGGGERLGTLILGRVNESFSDDDLLLGEYGATVVGMEILHEKTEEIEMEARSKAVVQMAISSLSYSELEAIDHIFEELNGKEGLLVASKIADRVGITRSVIVNALRKLESAGVIESRSLGMKGTYIKVLNDKFLVELEKLRSR</sequence>
<comment type="function">
    <text evidence="1">DNA-binding global transcriptional regulator which is involved in the adaptive response to starvation and acts by directly or indirectly controlling the expression of numerous genes in response to nutrient availability. During rapid exponential growth, CodY is highly active and represses genes whose products allow adaptation to nutrient depletion.</text>
</comment>
<comment type="subcellular location">
    <subcellularLocation>
        <location evidence="1">Cytoplasm</location>
    </subcellularLocation>
</comment>
<comment type="similarity">
    <text evidence="1">Belongs to the CodY family.</text>
</comment>
<organism>
    <name type="scientific">Oceanobacillus iheyensis (strain DSM 14371 / CIP 107618 / JCM 11309 / KCTC 3954 / HTE831)</name>
    <dbReference type="NCBI Taxonomy" id="221109"/>
    <lineage>
        <taxon>Bacteria</taxon>
        <taxon>Bacillati</taxon>
        <taxon>Bacillota</taxon>
        <taxon>Bacilli</taxon>
        <taxon>Bacillales</taxon>
        <taxon>Bacillaceae</taxon>
        <taxon>Oceanobacillus</taxon>
    </lineage>
</organism>
<keyword id="KW-0963">Cytoplasm</keyword>
<keyword id="KW-0238">DNA-binding</keyword>
<keyword id="KW-0597">Phosphoprotein</keyword>
<keyword id="KW-1185">Reference proteome</keyword>
<keyword id="KW-0678">Repressor</keyword>
<keyword id="KW-0804">Transcription</keyword>
<keyword id="KW-0805">Transcription regulation</keyword>
<dbReference type="EMBL" id="BA000028">
    <property type="protein sequence ID" value="BAC13507.1"/>
    <property type="molecule type" value="Genomic_DNA"/>
</dbReference>
<dbReference type="RefSeq" id="WP_011065951.1">
    <property type="nucleotide sequence ID" value="NC_004193.1"/>
</dbReference>
<dbReference type="SMR" id="P59386"/>
<dbReference type="STRING" id="221109.gene:10733791"/>
<dbReference type="KEGG" id="oih:OB1551"/>
<dbReference type="eggNOG" id="COG4465">
    <property type="taxonomic scope" value="Bacteria"/>
</dbReference>
<dbReference type="HOGENOM" id="CLU_089581_0_0_9"/>
<dbReference type="OrthoDB" id="2056at2"/>
<dbReference type="PhylomeDB" id="P59386"/>
<dbReference type="Proteomes" id="UP000000822">
    <property type="component" value="Chromosome"/>
</dbReference>
<dbReference type="GO" id="GO:0005737">
    <property type="term" value="C:cytoplasm"/>
    <property type="evidence" value="ECO:0007669"/>
    <property type="project" value="UniProtKB-SubCell"/>
</dbReference>
<dbReference type="GO" id="GO:0003677">
    <property type="term" value="F:DNA binding"/>
    <property type="evidence" value="ECO:0007669"/>
    <property type="project" value="UniProtKB-UniRule"/>
</dbReference>
<dbReference type="GO" id="GO:0003700">
    <property type="term" value="F:DNA-binding transcription factor activity"/>
    <property type="evidence" value="ECO:0007669"/>
    <property type="project" value="InterPro"/>
</dbReference>
<dbReference type="GO" id="GO:0005525">
    <property type="term" value="F:GTP binding"/>
    <property type="evidence" value="ECO:0007669"/>
    <property type="project" value="InterPro"/>
</dbReference>
<dbReference type="GO" id="GO:0045892">
    <property type="term" value="P:negative regulation of DNA-templated transcription"/>
    <property type="evidence" value="ECO:0007669"/>
    <property type="project" value="UniProtKB-UniRule"/>
</dbReference>
<dbReference type="FunFam" id="1.10.10.10:FF:000034">
    <property type="entry name" value="GTP-sensing transcriptional pleiotropic repressor CodY"/>
    <property type="match status" value="1"/>
</dbReference>
<dbReference type="FunFam" id="3.30.450.40:FF:000003">
    <property type="entry name" value="GTP-sensing transcriptional pleiotropic repressor CodY"/>
    <property type="match status" value="1"/>
</dbReference>
<dbReference type="Gene3D" id="3.30.450.40">
    <property type="match status" value="1"/>
</dbReference>
<dbReference type="Gene3D" id="1.10.10.10">
    <property type="entry name" value="Winged helix-like DNA-binding domain superfamily/Winged helix DNA-binding domain"/>
    <property type="match status" value="1"/>
</dbReference>
<dbReference type="HAMAP" id="MF_00621">
    <property type="entry name" value="HTH_type_CodY"/>
    <property type="match status" value="1"/>
</dbReference>
<dbReference type="InterPro" id="IPR014154">
    <property type="entry name" value="CodY"/>
</dbReference>
<dbReference type="InterPro" id="IPR029016">
    <property type="entry name" value="GAF-like_dom_sf"/>
</dbReference>
<dbReference type="InterPro" id="IPR013198">
    <property type="entry name" value="GTP_trans_reg_CodY_C"/>
</dbReference>
<dbReference type="InterPro" id="IPR010312">
    <property type="entry name" value="Transc_reg_CodY_N"/>
</dbReference>
<dbReference type="InterPro" id="IPR036388">
    <property type="entry name" value="WH-like_DNA-bd_sf"/>
</dbReference>
<dbReference type="InterPro" id="IPR036390">
    <property type="entry name" value="WH_DNA-bd_sf"/>
</dbReference>
<dbReference type="NCBIfam" id="TIGR02787">
    <property type="entry name" value="codY_Gpos"/>
    <property type="match status" value="1"/>
</dbReference>
<dbReference type="NCBIfam" id="NF003170">
    <property type="entry name" value="PRK04158.1"/>
    <property type="match status" value="1"/>
</dbReference>
<dbReference type="PANTHER" id="PTHR40062:SF1">
    <property type="entry name" value="GLOBAL TRANSCRIPTIONAL REGULATOR CODY"/>
    <property type="match status" value="1"/>
</dbReference>
<dbReference type="PANTHER" id="PTHR40062">
    <property type="entry name" value="GTP-SENSING TRANSCRIPTIONAL PLEIOTROPIC REPRESSOR CODY"/>
    <property type="match status" value="1"/>
</dbReference>
<dbReference type="Pfam" id="PF06018">
    <property type="entry name" value="CodY"/>
    <property type="match status" value="1"/>
</dbReference>
<dbReference type="Pfam" id="PF08222">
    <property type="entry name" value="HTH_CodY"/>
    <property type="match status" value="1"/>
</dbReference>
<dbReference type="PIRSF" id="PIRSF011572">
    <property type="entry name" value="GTP_sensing_CodY"/>
    <property type="match status" value="1"/>
</dbReference>
<dbReference type="SUPFAM" id="SSF46785">
    <property type="entry name" value="Winged helix' DNA-binding domain"/>
    <property type="match status" value="1"/>
</dbReference>
<reference key="1">
    <citation type="journal article" date="2002" name="Nucleic Acids Res.">
        <title>Genome sequence of Oceanobacillus iheyensis isolated from the Iheya Ridge and its unexpected adaptive capabilities to extreme environments.</title>
        <authorList>
            <person name="Takami H."/>
            <person name="Takaki Y."/>
            <person name="Uchiyama I."/>
        </authorList>
    </citation>
    <scope>NUCLEOTIDE SEQUENCE [LARGE SCALE GENOMIC DNA]</scope>
    <source>
        <strain>DSM 14371 / CIP 107618 / JCM 11309 / KCTC 3954 / HTE831</strain>
    </source>
</reference>
<gene>
    <name evidence="1" type="primary">codY</name>
    <name type="ordered locus">OB1551</name>
</gene>
<evidence type="ECO:0000255" key="1">
    <source>
        <dbReference type="HAMAP-Rule" id="MF_00621"/>
    </source>
</evidence>
<feature type="chain" id="PRO_0000213230" description="Global transcriptional regulator CodY">
    <location>
        <begin position="1"/>
        <end position="259"/>
    </location>
</feature>
<feature type="DNA-binding region" description="H-T-H motif" evidence="1">
    <location>
        <begin position="203"/>
        <end position="222"/>
    </location>
</feature>
<feature type="region of interest" description="GAF domain" evidence="1">
    <location>
        <begin position="1"/>
        <end position="155"/>
    </location>
</feature>
<feature type="modified residue" description="Phosphoserine" evidence="1">
    <location>
        <position position="215"/>
    </location>
</feature>
<name>CODY_OCEIH</name>
<protein>
    <recommendedName>
        <fullName evidence="1">Global transcriptional regulator CodY</fullName>
    </recommendedName>
</protein>